<accession>Q2G6Q7</accession>
<evidence type="ECO:0000255" key="1">
    <source>
        <dbReference type="HAMAP-Rule" id="MF_01224"/>
    </source>
</evidence>
<organism>
    <name type="scientific">Novosphingobium aromaticivorans (strain ATCC 700278 / DSM 12444 / CCUG 56034 / CIP 105152 / NBRC 16084 / F199)</name>
    <dbReference type="NCBI Taxonomy" id="279238"/>
    <lineage>
        <taxon>Bacteria</taxon>
        <taxon>Pseudomonadati</taxon>
        <taxon>Pseudomonadota</taxon>
        <taxon>Alphaproteobacteria</taxon>
        <taxon>Sphingomonadales</taxon>
        <taxon>Sphingomonadaceae</taxon>
        <taxon>Novosphingobium</taxon>
    </lineage>
</organism>
<reference key="1">
    <citation type="submission" date="2006-01" db="EMBL/GenBank/DDBJ databases">
        <title>Complete sequence of Novosphingobium aromaticivorans DSM 12444.</title>
        <authorList>
            <consortium name="US DOE Joint Genome Institute"/>
            <person name="Copeland A."/>
            <person name="Lucas S."/>
            <person name="Lapidus A."/>
            <person name="Barry K."/>
            <person name="Detter J.C."/>
            <person name="Glavina T."/>
            <person name="Hammon N."/>
            <person name="Israni S."/>
            <person name="Pitluck S."/>
            <person name="Chain P."/>
            <person name="Malfatti S."/>
            <person name="Shin M."/>
            <person name="Vergez L."/>
            <person name="Schmutz J."/>
            <person name="Larimer F."/>
            <person name="Land M."/>
            <person name="Kyrpides N."/>
            <person name="Ivanova N."/>
            <person name="Fredrickson J."/>
            <person name="Balkwill D."/>
            <person name="Romine M.F."/>
            <person name="Richardson P."/>
        </authorList>
    </citation>
    <scope>NUCLEOTIDE SEQUENCE [LARGE SCALE GENOMIC DNA]</scope>
    <source>
        <strain>ATCC 700278 / DSM 12444 / CCUG 56034 / CIP 105152 / NBRC 16084 / F199</strain>
    </source>
</reference>
<proteinExistence type="inferred from homology"/>
<feature type="chain" id="PRO_1000139283" description="Cyclic pyranopterin monophosphate synthase">
    <location>
        <begin position="1"/>
        <end position="157"/>
    </location>
</feature>
<feature type="active site" evidence="1">
    <location>
        <position position="126"/>
    </location>
</feature>
<feature type="binding site" evidence="1">
    <location>
        <begin position="75"/>
        <end position="77"/>
    </location>
    <ligand>
        <name>substrate</name>
    </ligand>
</feature>
<feature type="binding site" evidence="1">
    <location>
        <begin position="111"/>
        <end position="112"/>
    </location>
    <ligand>
        <name>substrate</name>
    </ligand>
</feature>
<name>MOAC_NOVAD</name>
<comment type="function">
    <text evidence="1">Catalyzes the conversion of (8S)-3',8-cyclo-7,8-dihydroguanosine 5'-triphosphate to cyclic pyranopterin monophosphate (cPMP).</text>
</comment>
<comment type="catalytic activity">
    <reaction evidence="1">
        <text>(8S)-3',8-cyclo-7,8-dihydroguanosine 5'-triphosphate = cyclic pyranopterin phosphate + diphosphate</text>
        <dbReference type="Rhea" id="RHEA:49580"/>
        <dbReference type="ChEBI" id="CHEBI:33019"/>
        <dbReference type="ChEBI" id="CHEBI:59648"/>
        <dbReference type="ChEBI" id="CHEBI:131766"/>
        <dbReference type="EC" id="4.6.1.17"/>
    </reaction>
</comment>
<comment type="pathway">
    <text evidence="1">Cofactor biosynthesis; molybdopterin biosynthesis.</text>
</comment>
<comment type="subunit">
    <text evidence="1">Homohexamer; trimer of dimers.</text>
</comment>
<comment type="similarity">
    <text evidence="1">Belongs to the MoaC family.</text>
</comment>
<protein>
    <recommendedName>
        <fullName evidence="1">Cyclic pyranopterin monophosphate synthase</fullName>
        <ecNumber evidence="1">4.6.1.17</ecNumber>
    </recommendedName>
    <alternativeName>
        <fullName evidence="1">Molybdenum cofactor biosynthesis protein C</fullName>
    </alternativeName>
</protein>
<gene>
    <name evidence="1" type="primary">moaC</name>
    <name type="ordered locus">Saro_2027</name>
</gene>
<dbReference type="EC" id="4.6.1.17" evidence="1"/>
<dbReference type="EMBL" id="CP000248">
    <property type="protein sequence ID" value="ABD26466.1"/>
    <property type="molecule type" value="Genomic_DNA"/>
</dbReference>
<dbReference type="RefSeq" id="WP_011445675.1">
    <property type="nucleotide sequence ID" value="NC_007794.1"/>
</dbReference>
<dbReference type="SMR" id="Q2G6Q7"/>
<dbReference type="STRING" id="279238.Saro_2027"/>
<dbReference type="KEGG" id="nar:Saro_2027"/>
<dbReference type="eggNOG" id="COG0315">
    <property type="taxonomic scope" value="Bacteria"/>
</dbReference>
<dbReference type="HOGENOM" id="CLU_074693_1_1_5"/>
<dbReference type="UniPathway" id="UPA00344"/>
<dbReference type="Proteomes" id="UP000009134">
    <property type="component" value="Chromosome"/>
</dbReference>
<dbReference type="GO" id="GO:0061799">
    <property type="term" value="F:cyclic pyranopterin monophosphate synthase activity"/>
    <property type="evidence" value="ECO:0007669"/>
    <property type="project" value="UniProtKB-UniRule"/>
</dbReference>
<dbReference type="GO" id="GO:0006777">
    <property type="term" value="P:Mo-molybdopterin cofactor biosynthetic process"/>
    <property type="evidence" value="ECO:0007669"/>
    <property type="project" value="UniProtKB-UniRule"/>
</dbReference>
<dbReference type="CDD" id="cd01420">
    <property type="entry name" value="MoaC_PE"/>
    <property type="match status" value="1"/>
</dbReference>
<dbReference type="Gene3D" id="3.30.70.640">
    <property type="entry name" value="Molybdopterin cofactor biosynthesis C (MoaC) domain"/>
    <property type="match status" value="1"/>
</dbReference>
<dbReference type="HAMAP" id="MF_01224_B">
    <property type="entry name" value="MoaC_B"/>
    <property type="match status" value="1"/>
</dbReference>
<dbReference type="InterPro" id="IPR023045">
    <property type="entry name" value="MoaC"/>
</dbReference>
<dbReference type="InterPro" id="IPR047594">
    <property type="entry name" value="MoaC_bact/euk"/>
</dbReference>
<dbReference type="InterPro" id="IPR036522">
    <property type="entry name" value="MoaC_sf"/>
</dbReference>
<dbReference type="InterPro" id="IPR050105">
    <property type="entry name" value="MoCo_biosynth_MoaA/MoaC"/>
</dbReference>
<dbReference type="InterPro" id="IPR002820">
    <property type="entry name" value="Mopterin_CF_biosynth-C_dom"/>
</dbReference>
<dbReference type="NCBIfam" id="TIGR00581">
    <property type="entry name" value="moaC"/>
    <property type="match status" value="1"/>
</dbReference>
<dbReference type="NCBIfam" id="NF006870">
    <property type="entry name" value="PRK09364.1"/>
    <property type="match status" value="1"/>
</dbReference>
<dbReference type="PANTHER" id="PTHR22960:SF29">
    <property type="entry name" value="CYCLIC PYRANOPTERIN MONOPHOSPHATE SYNTHASE"/>
    <property type="match status" value="1"/>
</dbReference>
<dbReference type="PANTHER" id="PTHR22960">
    <property type="entry name" value="MOLYBDOPTERIN COFACTOR SYNTHESIS PROTEIN A"/>
    <property type="match status" value="1"/>
</dbReference>
<dbReference type="Pfam" id="PF01967">
    <property type="entry name" value="MoaC"/>
    <property type="match status" value="1"/>
</dbReference>
<dbReference type="SUPFAM" id="SSF55040">
    <property type="entry name" value="Molybdenum cofactor biosynthesis protein C, MoaC"/>
    <property type="match status" value="1"/>
</dbReference>
<sequence length="157" mass="16330">MNDLTHIDSGGTARMVDVGGKAETHRVAIARGTIRMRGQTLDAIRSGNAPKGDVLGPARIAGIMAAKKTGDLIPLCHPLALDAVNVDFAFVADGIECTATASLTGRTGVEMEALTAVSVALLTIYDMAKALDKGMVIEAIRLVEKRGGKSGTWKAAE</sequence>
<keyword id="KW-0456">Lyase</keyword>
<keyword id="KW-0501">Molybdenum cofactor biosynthesis</keyword>
<keyword id="KW-1185">Reference proteome</keyword>